<name>MED25_SOLLC</name>
<dbReference type="EMBL" id="CM001075">
    <property type="status" value="NOT_ANNOTATED_CDS"/>
    <property type="molecule type" value="Genomic_DNA"/>
</dbReference>
<dbReference type="RefSeq" id="XP_004252687.1">
    <property type="nucleotide sequence ID" value="XM_004252639.3"/>
</dbReference>
<dbReference type="SMR" id="A0A3Q7JC00"/>
<dbReference type="FunCoup" id="A0A3Q7JC00">
    <property type="interactions" value="720"/>
</dbReference>
<dbReference type="STRING" id="4081.A0A3Q7JC00"/>
<dbReference type="PaxDb" id="4081-Solyc12g070100.1.1"/>
<dbReference type="EnsemblPlants" id="Solyc12g070100.2.1">
    <property type="protein sequence ID" value="Solyc12g070100.2.1"/>
    <property type="gene ID" value="Solyc12g070100.2"/>
</dbReference>
<dbReference type="GeneID" id="101258928"/>
<dbReference type="Gramene" id="Solyc12g070100.2.1">
    <property type="protein sequence ID" value="Solyc12g070100.2.1"/>
    <property type="gene ID" value="Solyc12g070100.2"/>
</dbReference>
<dbReference type="KEGG" id="sly:101258928"/>
<dbReference type="InParanoid" id="A0A3Q7JC00"/>
<dbReference type="OMA" id="NQMHQQT"/>
<dbReference type="OrthoDB" id="7690434at2759"/>
<dbReference type="Proteomes" id="UP000004994">
    <property type="component" value="Chromosome 12"/>
</dbReference>
<dbReference type="GO" id="GO:0016592">
    <property type="term" value="C:mediator complex"/>
    <property type="evidence" value="ECO:0000318"/>
    <property type="project" value="GO_Central"/>
</dbReference>
<dbReference type="GO" id="GO:0005667">
    <property type="term" value="C:transcription regulator complex"/>
    <property type="evidence" value="ECO:0000318"/>
    <property type="project" value="GO_Central"/>
</dbReference>
<dbReference type="GO" id="GO:0045944">
    <property type="term" value="P:positive regulation of transcription by RNA polymerase II"/>
    <property type="evidence" value="ECO:0000318"/>
    <property type="project" value="GO_Central"/>
</dbReference>
<dbReference type="InterPro" id="IPR021419">
    <property type="entry name" value="Mediator_Med25_VWA"/>
</dbReference>
<dbReference type="PANTHER" id="PTHR12433">
    <property type="entry name" value="MEDIATOR OF RNA POLYMERASE II TRANSCRIPTION SUBUNIT 25"/>
    <property type="match status" value="1"/>
</dbReference>
<dbReference type="PANTHER" id="PTHR12433:SF11">
    <property type="entry name" value="MEDIATOR OF RNA POLYMERASE II TRANSCRIPTION SUBUNIT 25"/>
    <property type="match status" value="1"/>
</dbReference>
<dbReference type="Pfam" id="PF11265">
    <property type="entry name" value="Med25_VWA"/>
    <property type="match status" value="1"/>
</dbReference>
<reference key="1">
    <citation type="journal article" date="2012" name="Nature">
        <title>The tomato genome sequence provides insights into fleshy fruit evolution.</title>
        <authorList>
            <consortium name="Tomato Genome Consortium"/>
        </authorList>
    </citation>
    <scope>NUCLEOTIDE SEQUENCE [LARGE SCALE GENOMIC DNA]</scope>
    <source>
        <strain>cv. Heinz 1706</strain>
    </source>
</reference>
<reference key="2">
    <citation type="journal article" date="2019" name="Plant Cell">
        <title>MYC2 regulates the termination of jasmonate signaling via an autoregulatory negative feedback loop.</title>
        <authorList>
            <person name="Liu Y."/>
            <person name="Du M."/>
            <person name="Deng L."/>
            <person name="Shen J."/>
            <person name="Fang M."/>
            <person name="Chen Q."/>
            <person name="Lu Y."/>
            <person name="Wang Q."/>
            <person name="Li C."/>
            <person name="Zhai Q."/>
        </authorList>
    </citation>
    <scope>FUNCTION</scope>
    <scope>INTERACTION WITH MYC2</scope>
</reference>
<keyword id="KW-1185">Reference proteome</keyword>
<comment type="function">
    <text evidence="1 3">Component of the Mediator complex, a coactivator involved in the regulated transcription of nearly all RNA polymerase II-dependent genes. Mediator functions as a bridge to convey information from gene-specific regulatory proteins to the basal RNA polymerase II transcription machinery. Mediator is recruited to promoters by direct interactions with regulatory proteins and serves as a scaffold for the assembly of a functional pre-initiation complex with RNA polymerase II and the general transcription factors (By similarity). Plays a positive role in wound-induced activation of jasmonate-responsive genes whose promoters are targeted by MYC2 (PubMed:30610166).</text>
</comment>
<comment type="subunit">
    <text evidence="3">Interacts with MYC2 (via N-terminus) (PubMed:30610166). MED25 competes with JAZ7 for binding to MYC2 (PubMed:30610166).</text>
</comment>
<comment type="similarity">
    <text evidence="5">Belongs to the Mediator complex subunit 25 family.</text>
</comment>
<gene>
    <name evidence="4" type="primary">MED25</name>
    <name evidence="5" type="ordered locus">Solyc12g070100</name>
</gene>
<accession>A0A3Q7JC00</accession>
<feature type="chain" id="PRO_0000447558" description="Mediator of RNA polymerase II transcription subunit 25">
    <location>
        <begin position="1"/>
        <end position="805"/>
    </location>
</feature>
<feature type="region of interest" description="Disordered" evidence="2">
    <location>
        <begin position="430"/>
        <end position="455"/>
    </location>
</feature>
<feature type="region of interest" description="Disordered" evidence="2">
    <location>
        <begin position="786"/>
        <end position="805"/>
    </location>
</feature>
<feature type="compositionally biased region" description="Low complexity" evidence="2">
    <location>
        <begin position="438"/>
        <end position="451"/>
    </location>
</feature>
<feature type="compositionally biased region" description="Low complexity" evidence="2">
    <location>
        <begin position="786"/>
        <end position="795"/>
    </location>
</feature>
<organism>
    <name type="scientific">Solanum lycopersicum</name>
    <name type="common">Tomato</name>
    <name type="synonym">Lycopersicon esculentum</name>
    <dbReference type="NCBI Taxonomy" id="4081"/>
    <lineage>
        <taxon>Eukaryota</taxon>
        <taxon>Viridiplantae</taxon>
        <taxon>Streptophyta</taxon>
        <taxon>Embryophyta</taxon>
        <taxon>Tracheophyta</taxon>
        <taxon>Spermatophyta</taxon>
        <taxon>Magnoliopsida</taxon>
        <taxon>eudicotyledons</taxon>
        <taxon>Gunneridae</taxon>
        <taxon>Pentapetalae</taxon>
        <taxon>asterids</taxon>
        <taxon>lamiids</taxon>
        <taxon>Solanales</taxon>
        <taxon>Solanaceae</taxon>
        <taxon>Solanoideae</taxon>
        <taxon>Solaneae</taxon>
        <taxon>Solanum</taxon>
        <taxon>Solanum subgen. Lycopersicon</taxon>
    </lineage>
</organism>
<evidence type="ECO:0000250" key="1">
    <source>
        <dbReference type="UniProtKB" id="Q7XYY2"/>
    </source>
</evidence>
<evidence type="ECO:0000256" key="2">
    <source>
        <dbReference type="SAM" id="MobiDB-lite"/>
    </source>
</evidence>
<evidence type="ECO:0000269" key="3">
    <source>
    </source>
</evidence>
<evidence type="ECO:0000303" key="4">
    <source>
    </source>
</evidence>
<evidence type="ECO:0000305" key="5"/>
<protein>
    <recommendedName>
        <fullName evidence="5">Mediator of RNA polymerase II transcription subunit 25</fullName>
    </recommendedName>
</protein>
<proteinExistence type="evidence at protein level"/>
<sequence length="805" mass="86438">MVDKLIVAVEGTAVLGPYWKIIVSDYLDKIIRCFFGVDSTSQKSSAADVEVSMVMFNTHGPYSACLVQRSGWTKDMDTFLQWLSAIPFSGGGFNDAAVAEGLAEALVMFSVPNGNQTQQKMEGKKHCILISGSNPYPLPTPVYRPQMQKLEQNENIEAQTDSRLADAETVAKTFPQCSISLSVICPKKLPKLRAIYDAGKHNPRAADPPIDTAKNPNFLVLISENFIEARAAFSRSGLTNLASNHSPVKMDVSSVLPVSGTQSISNSAANVSVISRPPISAGNIPPATVKIEPNTVTPMTGPGFSHIPSVRPALQPVPSLQASSPLSVSQEMVSHTENVQEMKPIVSGMTQSLRPVAAAAANVKILNGVAQAHQVLGGGTSIGLQSMGGTPMLSSMISSGMASSVPASQAVLSSGQSGVTTMTGAVPLAGSAQNTQNSAPSSFTSTAPSMSGQTVPAMSQGNIPGTQMMPSGTGMNQNMLTGLGATGLPSGTGTMMPTPGMSQQGQPGMQPVGVNSTSANMPLSQQQTSGALPSAQSKYVKVWEGNLSGQRQGQPVFITRLEGYRSASASESLAANWPPTMQIVRLISQDHMNNKQYVGKADFLVFRAMNQHGFLSQLQEKKLCAVIQLPSQTLLLSVSDKACRLIGMLFPGDMVVFKPQIPSQQQQQQQQQQLQAQHPQLQQQQQQQQQHLTQLQQQPLQQLQQQQQQQPLMQLQQQQQIPLQQSQVPQMQQQQIHQMQQQQQIPQMQQQQQIPQMQQQQQQQPMVGTGMNQTYMQGPARSQLMSQSQGSSQGLPITPGGGFMN</sequence>